<proteinExistence type="evidence at protein level"/>
<feature type="chain" id="PRO_0000110533" description="Inositol-pentakisphosphate 2-kinase">
    <location>
        <begin position="1"/>
        <end position="621"/>
    </location>
</feature>
<feature type="region of interest" description="Disordered" evidence="1">
    <location>
        <begin position="1"/>
        <end position="20"/>
    </location>
</feature>
<feature type="region of interest" description="Disordered" evidence="1">
    <location>
        <begin position="87"/>
        <end position="111"/>
    </location>
</feature>
<feature type="region of interest" description="Disordered" evidence="1">
    <location>
        <begin position="201"/>
        <end position="226"/>
    </location>
</feature>
<feature type="region of interest" description="Disordered" evidence="1">
    <location>
        <begin position="391"/>
        <end position="416"/>
    </location>
</feature>
<feature type="region of interest" description="Disordered" evidence="1">
    <location>
        <begin position="514"/>
        <end position="565"/>
    </location>
</feature>
<feature type="short sequence motif" description="EXKPK motif">
    <location>
        <begin position="241"/>
        <end position="245"/>
    </location>
</feature>
<feature type="compositionally biased region" description="Basic and acidic residues" evidence="1">
    <location>
        <begin position="87"/>
        <end position="108"/>
    </location>
</feature>
<feature type="compositionally biased region" description="Gly residues" evidence="1">
    <location>
        <begin position="209"/>
        <end position="221"/>
    </location>
</feature>
<feature type="compositionally biased region" description="Low complexity" evidence="1">
    <location>
        <begin position="397"/>
        <end position="416"/>
    </location>
</feature>
<feature type="compositionally biased region" description="Low complexity" evidence="1">
    <location>
        <begin position="529"/>
        <end position="539"/>
    </location>
</feature>
<feature type="compositionally biased region" description="Polar residues" evidence="1">
    <location>
        <begin position="540"/>
        <end position="565"/>
    </location>
</feature>
<name>IPPK_DROME</name>
<sequence length="621" mass="67447">MTAERGPRSPGTGQKLRLRATEPMPQWTAKNLHALLDLPAAMELRQIELIYRAEGNANLVLALPQFKKVLRLPKMISSRLRQAAHQRHELADEVARPEGQRVSSERAGTENAGDLTMPDFMAYIGIMRRLLGNEFVCGADIVAIPKEDDRFWINEHIRAQRPVSRLDKEFVGPFGLLLPDVTQLPATFDVLLANLQAKGTTGDESGAAAGVGDGGGVGRGAGTRTKNRSAVRRLGDTYAIEIKPKQGWLQLASDVNDLFDLMPSGAVTKPKETTCNQEENEPSARDKCWCRFCSMQLLKMHNGKIKRLGHYCPLDLFSGTPSRMLDALDALLACPQNNLRVFQNSNLIYGDHANSISFDELSSRVFPGEIMVLIKHLLVACLLREYEHPESKRAEGSNQSQKQQQEQPEPEQLNQSRVSIAATETKAGAAGIGAANVVLPLGGRAAAPVVTAGQSSTRTRAAAATATTQRYTKVARVETTITRQAATSMAAGPASSSQLSGNVLATATATATATAMATSGRTETKTEPETPAEAASTTSRNVNQNESQKLNRNEPANQTQAQNNKTEIFRLPKNCVLQKILNLQLLVKVSQPIKLLPKLLSLCPFGFVYSACPPENLGNCR</sequence>
<dbReference type="EC" id="2.7.1.158" evidence="5"/>
<dbReference type="EMBL" id="AE013599">
    <property type="protein sequence ID" value="AAF46633.2"/>
    <property type="molecule type" value="Genomic_DNA"/>
</dbReference>
<dbReference type="EMBL" id="AY061821">
    <property type="protein sequence ID" value="AAL27632.1"/>
    <property type="molecule type" value="mRNA"/>
</dbReference>
<dbReference type="RefSeq" id="NP_611522.1">
    <property type="nucleotide sequence ID" value="NM_137678.3"/>
</dbReference>
<dbReference type="BioGRID" id="63006">
    <property type="interactions" value="1"/>
</dbReference>
<dbReference type="FunCoup" id="Q9W2Q7">
    <property type="interactions" value="383"/>
</dbReference>
<dbReference type="IntAct" id="Q9W2Q7">
    <property type="interactions" value="2"/>
</dbReference>
<dbReference type="STRING" id="7227.FBpp0112280"/>
<dbReference type="PaxDb" id="7227-FBpp0112280"/>
<dbReference type="DNASU" id="37360"/>
<dbReference type="EnsemblMetazoa" id="FBtr0071515">
    <property type="protein sequence ID" value="FBpp0071444"/>
    <property type="gene ID" value="FBgn0050295"/>
</dbReference>
<dbReference type="GeneID" id="37360"/>
<dbReference type="KEGG" id="dme:Dmel_CG30295"/>
<dbReference type="UCSC" id="CG30295-RA">
    <property type="organism name" value="d. melanogaster"/>
</dbReference>
<dbReference type="AGR" id="FB:FBgn0050295"/>
<dbReference type="CTD" id="37360"/>
<dbReference type="FlyBase" id="FBgn0050295">
    <property type="gene designation" value="Ipk1"/>
</dbReference>
<dbReference type="VEuPathDB" id="VectorBase:FBgn0050295"/>
<dbReference type="eggNOG" id="KOG4749">
    <property type="taxonomic scope" value="Eukaryota"/>
</dbReference>
<dbReference type="GeneTree" id="ENSGT00390000010053"/>
<dbReference type="InParanoid" id="Q9W2Q7"/>
<dbReference type="OrthoDB" id="272370at2759"/>
<dbReference type="BioGRID-ORCS" id="37360">
    <property type="hits" value="0 hits in 3 CRISPR screens"/>
</dbReference>
<dbReference type="GenomeRNAi" id="37360"/>
<dbReference type="PRO" id="PR:Q9W2Q7"/>
<dbReference type="Proteomes" id="UP000000803">
    <property type="component" value="Chromosome 2R"/>
</dbReference>
<dbReference type="Bgee" id="FBgn0050295">
    <property type="expression patterns" value="Expressed in enteroblast (Drosophila) in digestive tract and 54 other cell types or tissues"/>
</dbReference>
<dbReference type="ExpressionAtlas" id="Q9W2Q7">
    <property type="expression patterns" value="baseline and differential"/>
</dbReference>
<dbReference type="GO" id="GO:0005634">
    <property type="term" value="C:nucleus"/>
    <property type="evidence" value="ECO:0000318"/>
    <property type="project" value="GO_Central"/>
</dbReference>
<dbReference type="GO" id="GO:0005524">
    <property type="term" value="F:ATP binding"/>
    <property type="evidence" value="ECO:0007669"/>
    <property type="project" value="UniProtKB-KW"/>
</dbReference>
<dbReference type="GO" id="GO:0035299">
    <property type="term" value="F:inositol-1,3,4,5,6-pentakisphosphate 2-kinase activity"/>
    <property type="evidence" value="ECO:0000315"/>
    <property type="project" value="UniProtKB"/>
</dbReference>
<dbReference type="GO" id="GO:0032958">
    <property type="term" value="P:inositol phosphate biosynthetic process"/>
    <property type="evidence" value="ECO:0000314"/>
    <property type="project" value="FlyBase"/>
</dbReference>
<dbReference type="FunFam" id="3.30.200.110:FF:000004">
    <property type="entry name" value="Ipk1, isoform B"/>
    <property type="match status" value="1"/>
</dbReference>
<dbReference type="Gene3D" id="3.30.200.110">
    <property type="entry name" value="Inositol-pentakisphosphate 2-kinase, N-lobe"/>
    <property type="match status" value="1"/>
</dbReference>
<dbReference type="InterPro" id="IPR009286">
    <property type="entry name" value="Ins_P5_2-kin"/>
</dbReference>
<dbReference type="InterPro" id="IPR043001">
    <property type="entry name" value="IP5_2-K_N_lobe"/>
</dbReference>
<dbReference type="PANTHER" id="PTHR14456">
    <property type="entry name" value="INOSITOL POLYPHOSPHATE KINASE 1"/>
    <property type="match status" value="1"/>
</dbReference>
<dbReference type="PANTHER" id="PTHR14456:SF2">
    <property type="entry name" value="INOSITOL-PENTAKISPHOSPHATE 2-KINASE"/>
    <property type="match status" value="1"/>
</dbReference>
<dbReference type="Pfam" id="PF06090">
    <property type="entry name" value="Ins_P5_2-kin"/>
    <property type="match status" value="1"/>
</dbReference>
<keyword id="KW-0067">ATP-binding</keyword>
<keyword id="KW-0418">Kinase</keyword>
<keyword id="KW-0547">Nucleotide-binding</keyword>
<keyword id="KW-1185">Reference proteome</keyword>
<keyword id="KW-0808">Transferase</keyword>
<protein>
    <recommendedName>
        <fullName>Inositol-pentakisphosphate 2-kinase</fullName>
        <ecNumber evidence="5">2.7.1.158</ecNumber>
    </recommendedName>
    <alternativeName>
        <fullName>Inositol-1,3,4,5,6-pentakisphosphate 2-kinase</fullName>
    </alternativeName>
    <alternativeName>
        <fullName>Ins(1,3,4,5,6)P5 2-kinase</fullName>
        <shortName evidence="3">DmIpk1</shortName>
        <shortName>InsP5 2-kinase</shortName>
    </alternativeName>
</protein>
<accession>Q9W2Q7</accession>
<accession>Q95R36</accession>
<gene>
    <name type="primary">Ipk1</name>
    <name type="ORF">CG30295</name>
</gene>
<evidence type="ECO:0000256" key="1">
    <source>
        <dbReference type="SAM" id="MobiDB-lite"/>
    </source>
</evidence>
<evidence type="ECO:0000269" key="2">
    <source>
    </source>
</evidence>
<evidence type="ECO:0000303" key="3">
    <source>
    </source>
</evidence>
<evidence type="ECO:0000305" key="4"/>
<evidence type="ECO:0000305" key="5">
    <source>
    </source>
</evidence>
<reference key="1">
    <citation type="journal article" date="2000" name="Science">
        <title>The genome sequence of Drosophila melanogaster.</title>
        <authorList>
            <person name="Adams M.D."/>
            <person name="Celniker S.E."/>
            <person name="Holt R.A."/>
            <person name="Evans C.A."/>
            <person name="Gocayne J.D."/>
            <person name="Amanatides P.G."/>
            <person name="Scherer S.E."/>
            <person name="Li P.W."/>
            <person name="Hoskins R.A."/>
            <person name="Galle R.F."/>
            <person name="George R.A."/>
            <person name="Lewis S.E."/>
            <person name="Richards S."/>
            <person name="Ashburner M."/>
            <person name="Henderson S.N."/>
            <person name="Sutton G.G."/>
            <person name="Wortman J.R."/>
            <person name="Yandell M.D."/>
            <person name="Zhang Q."/>
            <person name="Chen L.X."/>
            <person name="Brandon R.C."/>
            <person name="Rogers Y.-H.C."/>
            <person name="Blazej R.G."/>
            <person name="Champe M."/>
            <person name="Pfeiffer B.D."/>
            <person name="Wan K.H."/>
            <person name="Doyle C."/>
            <person name="Baxter E.G."/>
            <person name="Helt G."/>
            <person name="Nelson C.R."/>
            <person name="Miklos G.L.G."/>
            <person name="Abril J.F."/>
            <person name="Agbayani A."/>
            <person name="An H.-J."/>
            <person name="Andrews-Pfannkoch C."/>
            <person name="Baldwin D."/>
            <person name="Ballew R.M."/>
            <person name="Basu A."/>
            <person name="Baxendale J."/>
            <person name="Bayraktaroglu L."/>
            <person name="Beasley E.M."/>
            <person name="Beeson K.Y."/>
            <person name="Benos P.V."/>
            <person name="Berman B.P."/>
            <person name="Bhandari D."/>
            <person name="Bolshakov S."/>
            <person name="Borkova D."/>
            <person name="Botchan M.R."/>
            <person name="Bouck J."/>
            <person name="Brokstein P."/>
            <person name="Brottier P."/>
            <person name="Burtis K.C."/>
            <person name="Busam D.A."/>
            <person name="Butler H."/>
            <person name="Cadieu E."/>
            <person name="Center A."/>
            <person name="Chandra I."/>
            <person name="Cherry J.M."/>
            <person name="Cawley S."/>
            <person name="Dahlke C."/>
            <person name="Davenport L.B."/>
            <person name="Davies P."/>
            <person name="de Pablos B."/>
            <person name="Delcher A."/>
            <person name="Deng Z."/>
            <person name="Mays A.D."/>
            <person name="Dew I."/>
            <person name="Dietz S.M."/>
            <person name="Dodson K."/>
            <person name="Doup L.E."/>
            <person name="Downes M."/>
            <person name="Dugan-Rocha S."/>
            <person name="Dunkov B.C."/>
            <person name="Dunn P."/>
            <person name="Durbin K.J."/>
            <person name="Evangelista C.C."/>
            <person name="Ferraz C."/>
            <person name="Ferriera S."/>
            <person name="Fleischmann W."/>
            <person name="Fosler C."/>
            <person name="Gabrielian A.E."/>
            <person name="Garg N.S."/>
            <person name="Gelbart W.M."/>
            <person name="Glasser K."/>
            <person name="Glodek A."/>
            <person name="Gong F."/>
            <person name="Gorrell J.H."/>
            <person name="Gu Z."/>
            <person name="Guan P."/>
            <person name="Harris M."/>
            <person name="Harris N.L."/>
            <person name="Harvey D.A."/>
            <person name="Heiman T.J."/>
            <person name="Hernandez J.R."/>
            <person name="Houck J."/>
            <person name="Hostin D."/>
            <person name="Houston K.A."/>
            <person name="Howland T.J."/>
            <person name="Wei M.-H."/>
            <person name="Ibegwam C."/>
            <person name="Jalali M."/>
            <person name="Kalush F."/>
            <person name="Karpen G.H."/>
            <person name="Ke Z."/>
            <person name="Kennison J.A."/>
            <person name="Ketchum K.A."/>
            <person name="Kimmel B.E."/>
            <person name="Kodira C.D."/>
            <person name="Kraft C.L."/>
            <person name="Kravitz S."/>
            <person name="Kulp D."/>
            <person name="Lai Z."/>
            <person name="Lasko P."/>
            <person name="Lei Y."/>
            <person name="Levitsky A.A."/>
            <person name="Li J.H."/>
            <person name="Li Z."/>
            <person name="Liang Y."/>
            <person name="Lin X."/>
            <person name="Liu X."/>
            <person name="Mattei B."/>
            <person name="McIntosh T.C."/>
            <person name="McLeod M.P."/>
            <person name="McPherson D."/>
            <person name="Merkulov G."/>
            <person name="Milshina N.V."/>
            <person name="Mobarry C."/>
            <person name="Morris J."/>
            <person name="Moshrefi A."/>
            <person name="Mount S.M."/>
            <person name="Moy M."/>
            <person name="Murphy B."/>
            <person name="Murphy L."/>
            <person name="Muzny D.M."/>
            <person name="Nelson D.L."/>
            <person name="Nelson D.R."/>
            <person name="Nelson K.A."/>
            <person name="Nixon K."/>
            <person name="Nusskern D.R."/>
            <person name="Pacleb J.M."/>
            <person name="Palazzolo M."/>
            <person name="Pittman G.S."/>
            <person name="Pan S."/>
            <person name="Pollard J."/>
            <person name="Puri V."/>
            <person name="Reese M.G."/>
            <person name="Reinert K."/>
            <person name="Remington K."/>
            <person name="Saunders R.D.C."/>
            <person name="Scheeler F."/>
            <person name="Shen H."/>
            <person name="Shue B.C."/>
            <person name="Siden-Kiamos I."/>
            <person name="Simpson M."/>
            <person name="Skupski M.P."/>
            <person name="Smith T.J."/>
            <person name="Spier E."/>
            <person name="Spradling A.C."/>
            <person name="Stapleton M."/>
            <person name="Strong R."/>
            <person name="Sun E."/>
            <person name="Svirskas R."/>
            <person name="Tector C."/>
            <person name="Turner R."/>
            <person name="Venter E."/>
            <person name="Wang A.H."/>
            <person name="Wang X."/>
            <person name="Wang Z.-Y."/>
            <person name="Wassarman D.A."/>
            <person name="Weinstock G.M."/>
            <person name="Weissenbach J."/>
            <person name="Williams S.M."/>
            <person name="Woodage T."/>
            <person name="Worley K.C."/>
            <person name="Wu D."/>
            <person name="Yang S."/>
            <person name="Yao Q.A."/>
            <person name="Ye J."/>
            <person name="Yeh R.-F."/>
            <person name="Zaveri J.S."/>
            <person name="Zhan M."/>
            <person name="Zhang G."/>
            <person name="Zhao Q."/>
            <person name="Zheng L."/>
            <person name="Zheng X.H."/>
            <person name="Zhong F.N."/>
            <person name="Zhong W."/>
            <person name="Zhou X."/>
            <person name="Zhu S.C."/>
            <person name="Zhu X."/>
            <person name="Smith H.O."/>
            <person name="Gibbs R.A."/>
            <person name="Myers E.W."/>
            <person name="Rubin G.M."/>
            <person name="Venter J.C."/>
        </authorList>
    </citation>
    <scope>NUCLEOTIDE SEQUENCE [LARGE SCALE GENOMIC DNA]</scope>
    <source>
        <strain>Berkeley</strain>
    </source>
</reference>
<reference key="2">
    <citation type="journal article" date="2002" name="Genome Biol.">
        <title>Annotation of the Drosophila melanogaster euchromatic genome: a systematic review.</title>
        <authorList>
            <person name="Misra S."/>
            <person name="Crosby M.A."/>
            <person name="Mungall C.J."/>
            <person name="Matthews B.B."/>
            <person name="Campbell K.S."/>
            <person name="Hradecky P."/>
            <person name="Huang Y."/>
            <person name="Kaminker J.S."/>
            <person name="Millburn G.H."/>
            <person name="Prochnik S.E."/>
            <person name="Smith C.D."/>
            <person name="Tupy J.L."/>
            <person name="Whitfield E.J."/>
            <person name="Bayraktaroglu L."/>
            <person name="Berman B.P."/>
            <person name="Bettencourt B.R."/>
            <person name="Celniker S.E."/>
            <person name="de Grey A.D.N.J."/>
            <person name="Drysdale R.A."/>
            <person name="Harris N.L."/>
            <person name="Richter J."/>
            <person name="Russo S."/>
            <person name="Schroeder A.J."/>
            <person name="Shu S.Q."/>
            <person name="Stapleton M."/>
            <person name="Yamada C."/>
            <person name="Ashburner M."/>
            <person name="Gelbart W.M."/>
            <person name="Rubin G.M."/>
            <person name="Lewis S.E."/>
        </authorList>
    </citation>
    <scope>GENOME REANNOTATION</scope>
    <source>
        <strain>Berkeley</strain>
    </source>
</reference>
<reference key="3">
    <citation type="journal article" date="2002" name="Genome Biol.">
        <title>A Drosophila full-length cDNA resource.</title>
        <authorList>
            <person name="Stapleton M."/>
            <person name="Carlson J.W."/>
            <person name="Brokstein P."/>
            <person name="Yu C."/>
            <person name="Champe M."/>
            <person name="George R.A."/>
            <person name="Guarin H."/>
            <person name="Kronmiller B."/>
            <person name="Pacleb J.M."/>
            <person name="Park S."/>
            <person name="Wan K.H."/>
            <person name="Rubin G.M."/>
            <person name="Celniker S.E."/>
        </authorList>
    </citation>
    <scope>NUCLEOTIDE SEQUENCE [LARGE SCALE MRNA]</scope>
    <source>
        <strain>Berkeley</strain>
        <tissue>Head</tissue>
    </source>
</reference>
<reference key="4">
    <citation type="journal article" date="2004" name="J. Biol. Chem.">
        <title>A molecular basis for inositol polyphosphate synthesis in Drosophila melanogaster.</title>
        <authorList>
            <person name="Seeds A.M."/>
            <person name="Sandquist J.C."/>
            <person name="Spana E.P."/>
            <person name="York J.D."/>
        </authorList>
    </citation>
    <scope>FUNCTION</scope>
    <scope>CATALYTIC ACTIVITY</scope>
</reference>
<comment type="function">
    <text evidence="2 3 5">Contributes to the formation of Ins(1,2,3,4,5,6)P6 (InsP6, IP6 or phytate) (PubMed:15322119). Phosphorylates Ins(1,3,4,5,6)P5 at position 2 to form InsP6 (Probable). Together with Ipk2, they are the main contributors to higher InsP synthesis (PubMed:15322119).</text>
</comment>
<comment type="catalytic activity">
    <reaction evidence="5">
        <text>1D-myo-inositol 1,3,4,5,6-pentakisphosphate + ATP = 1D-myo-inositol hexakisphosphate + ADP + H(+)</text>
        <dbReference type="Rhea" id="RHEA:20313"/>
        <dbReference type="ChEBI" id="CHEBI:15378"/>
        <dbReference type="ChEBI" id="CHEBI:30616"/>
        <dbReference type="ChEBI" id="CHEBI:57733"/>
        <dbReference type="ChEBI" id="CHEBI:58130"/>
        <dbReference type="ChEBI" id="CHEBI:456216"/>
        <dbReference type="EC" id="2.7.1.158"/>
    </reaction>
    <physiologicalReaction direction="left-to-right" evidence="5">
        <dbReference type="Rhea" id="RHEA:20314"/>
    </physiologicalReaction>
</comment>
<comment type="domain">
    <text>The EXKPK motif is conserved in inositol-pentakisphosphate 2-kinases of both family 1 and 2.</text>
</comment>
<comment type="similarity">
    <text evidence="4">Belongs to the IPK1 type 2 family.</text>
</comment>
<organism>
    <name type="scientific">Drosophila melanogaster</name>
    <name type="common">Fruit fly</name>
    <dbReference type="NCBI Taxonomy" id="7227"/>
    <lineage>
        <taxon>Eukaryota</taxon>
        <taxon>Metazoa</taxon>
        <taxon>Ecdysozoa</taxon>
        <taxon>Arthropoda</taxon>
        <taxon>Hexapoda</taxon>
        <taxon>Insecta</taxon>
        <taxon>Pterygota</taxon>
        <taxon>Neoptera</taxon>
        <taxon>Endopterygota</taxon>
        <taxon>Diptera</taxon>
        <taxon>Brachycera</taxon>
        <taxon>Muscomorpha</taxon>
        <taxon>Ephydroidea</taxon>
        <taxon>Drosophilidae</taxon>
        <taxon>Drosophila</taxon>
        <taxon>Sophophora</taxon>
    </lineage>
</organism>